<organism>
    <name type="scientific">Salmonella paratyphi A (strain AKU_12601)</name>
    <dbReference type="NCBI Taxonomy" id="554290"/>
    <lineage>
        <taxon>Bacteria</taxon>
        <taxon>Pseudomonadati</taxon>
        <taxon>Pseudomonadota</taxon>
        <taxon>Gammaproteobacteria</taxon>
        <taxon>Enterobacterales</taxon>
        <taxon>Enterobacteriaceae</taxon>
        <taxon>Salmonella</taxon>
    </lineage>
</organism>
<dbReference type="EC" id="1.3.3.3" evidence="1"/>
<dbReference type="EMBL" id="FM200053">
    <property type="protein sequence ID" value="CAR58513.1"/>
    <property type="molecule type" value="Genomic_DNA"/>
</dbReference>
<dbReference type="RefSeq" id="WP_000801341.1">
    <property type="nucleotide sequence ID" value="NC_011147.1"/>
</dbReference>
<dbReference type="SMR" id="B5BB50"/>
<dbReference type="KEGG" id="sek:SSPA0389"/>
<dbReference type="HOGENOM" id="CLU_026169_0_1_6"/>
<dbReference type="UniPathway" id="UPA00251">
    <property type="reaction ID" value="UER00322"/>
</dbReference>
<dbReference type="Proteomes" id="UP000001869">
    <property type="component" value="Chromosome"/>
</dbReference>
<dbReference type="GO" id="GO:0005737">
    <property type="term" value="C:cytoplasm"/>
    <property type="evidence" value="ECO:0007669"/>
    <property type="project" value="UniProtKB-SubCell"/>
</dbReference>
<dbReference type="GO" id="GO:0004109">
    <property type="term" value="F:coproporphyrinogen oxidase activity"/>
    <property type="evidence" value="ECO:0007669"/>
    <property type="project" value="UniProtKB-UniRule"/>
</dbReference>
<dbReference type="GO" id="GO:0046872">
    <property type="term" value="F:metal ion binding"/>
    <property type="evidence" value="ECO:0007669"/>
    <property type="project" value="UniProtKB-KW"/>
</dbReference>
<dbReference type="GO" id="GO:0042803">
    <property type="term" value="F:protein homodimerization activity"/>
    <property type="evidence" value="ECO:0000250"/>
    <property type="project" value="UniProtKB"/>
</dbReference>
<dbReference type="GO" id="GO:0006782">
    <property type="term" value="P:protoporphyrinogen IX biosynthetic process"/>
    <property type="evidence" value="ECO:0007669"/>
    <property type="project" value="UniProtKB-UniRule"/>
</dbReference>
<dbReference type="FunFam" id="3.40.1500.10:FF:000001">
    <property type="entry name" value="Oxygen-dependent coproporphyrinogen-III oxidase"/>
    <property type="match status" value="1"/>
</dbReference>
<dbReference type="Gene3D" id="3.40.1500.10">
    <property type="entry name" value="Coproporphyrinogen III oxidase, aerobic"/>
    <property type="match status" value="1"/>
</dbReference>
<dbReference type="HAMAP" id="MF_00333">
    <property type="entry name" value="Coprogen_oxidas"/>
    <property type="match status" value="1"/>
</dbReference>
<dbReference type="InterPro" id="IPR001260">
    <property type="entry name" value="Coprogen_oxidase_aer"/>
</dbReference>
<dbReference type="InterPro" id="IPR036406">
    <property type="entry name" value="Coprogen_oxidase_aer_sf"/>
</dbReference>
<dbReference type="InterPro" id="IPR018375">
    <property type="entry name" value="Coprogen_oxidase_CS"/>
</dbReference>
<dbReference type="NCBIfam" id="NF003727">
    <property type="entry name" value="PRK05330.1"/>
    <property type="match status" value="1"/>
</dbReference>
<dbReference type="PANTHER" id="PTHR10755">
    <property type="entry name" value="COPROPORPHYRINOGEN III OXIDASE, MITOCHONDRIAL"/>
    <property type="match status" value="1"/>
</dbReference>
<dbReference type="PANTHER" id="PTHR10755:SF0">
    <property type="entry name" value="OXYGEN-DEPENDENT COPROPORPHYRINOGEN-III OXIDASE, MITOCHONDRIAL"/>
    <property type="match status" value="1"/>
</dbReference>
<dbReference type="Pfam" id="PF01218">
    <property type="entry name" value="Coprogen_oxidas"/>
    <property type="match status" value="1"/>
</dbReference>
<dbReference type="PIRSF" id="PIRSF000166">
    <property type="entry name" value="Coproporphyri_ox"/>
    <property type="match status" value="1"/>
</dbReference>
<dbReference type="PRINTS" id="PR00073">
    <property type="entry name" value="COPRGNOXDASE"/>
</dbReference>
<dbReference type="SUPFAM" id="SSF102886">
    <property type="entry name" value="Coproporphyrinogen III oxidase"/>
    <property type="match status" value="1"/>
</dbReference>
<dbReference type="PROSITE" id="PS01021">
    <property type="entry name" value="COPROGEN_OXIDASE"/>
    <property type="match status" value="1"/>
</dbReference>
<feature type="chain" id="PRO_1000119824" description="Oxygen-dependent coproporphyrinogen-III oxidase">
    <location>
        <begin position="1"/>
        <end position="308"/>
    </location>
</feature>
<feature type="region of interest" description="Important for dimerization" evidence="1">
    <location>
        <begin position="240"/>
        <end position="275"/>
    </location>
</feature>
<feature type="active site" description="Proton donor" evidence="1">
    <location>
        <position position="106"/>
    </location>
</feature>
<feature type="binding site" evidence="1">
    <location>
        <position position="92"/>
    </location>
    <ligand>
        <name>substrate</name>
    </ligand>
</feature>
<feature type="binding site" evidence="1">
    <location>
        <position position="96"/>
    </location>
    <ligand>
        <name>a divalent metal cation</name>
        <dbReference type="ChEBI" id="CHEBI:60240"/>
    </ligand>
</feature>
<feature type="binding site" evidence="1">
    <location>
        <position position="106"/>
    </location>
    <ligand>
        <name>a divalent metal cation</name>
        <dbReference type="ChEBI" id="CHEBI:60240"/>
    </ligand>
</feature>
<feature type="binding site" evidence="1">
    <location>
        <begin position="108"/>
        <end position="110"/>
    </location>
    <ligand>
        <name>substrate</name>
    </ligand>
</feature>
<feature type="binding site" evidence="1">
    <location>
        <position position="145"/>
    </location>
    <ligand>
        <name>a divalent metal cation</name>
        <dbReference type="ChEBI" id="CHEBI:60240"/>
    </ligand>
</feature>
<feature type="binding site" evidence="1">
    <location>
        <position position="175"/>
    </location>
    <ligand>
        <name>a divalent metal cation</name>
        <dbReference type="ChEBI" id="CHEBI:60240"/>
    </ligand>
</feature>
<feature type="binding site" evidence="1">
    <location>
        <begin position="258"/>
        <end position="260"/>
    </location>
    <ligand>
        <name>substrate</name>
    </ligand>
</feature>
<feature type="site" description="Important for dimerization" evidence="1">
    <location>
        <position position="175"/>
    </location>
</feature>
<name>HEM6_SALPK</name>
<proteinExistence type="inferred from homology"/>
<sequence>MKPDAHHVKQFLLRLQDDICQTLSAVDGANFVEDSWRREAGGGGRSRVLRNGGIFEQAGVNFSHVHGDAMPASATAHRPELAGRSFEAMGVSLVVHPHNPYIPTSHANVRFFIAEKPGADPVWWFGGGFDLTPYYGFEEDAVHWHRTARDLCQPFGDDVYPRYKKWCDDYFFLKHRNEQRGIGGLFFDDLNTPDFDHCFAFMQAVGNGYTEAYLPIVERRKAMVWGERERNFQLYRRGRYVEFNLVWDRGTLFGLQTGGRTESILMSMPPLVRWEYDWQPEAGSPEAALSEFIQVRDWVSLPDNSSVS</sequence>
<comment type="function">
    <text evidence="1">Involved in the heme biosynthesis. Catalyzes the aerobic oxidative decarboxylation of propionate groups of rings A and B of coproporphyrinogen-III to yield the vinyl groups in protoporphyrinogen-IX.</text>
</comment>
<comment type="catalytic activity">
    <reaction evidence="1">
        <text>coproporphyrinogen III + O2 + 2 H(+) = protoporphyrinogen IX + 2 CO2 + 2 H2O</text>
        <dbReference type="Rhea" id="RHEA:18257"/>
        <dbReference type="ChEBI" id="CHEBI:15377"/>
        <dbReference type="ChEBI" id="CHEBI:15378"/>
        <dbReference type="ChEBI" id="CHEBI:15379"/>
        <dbReference type="ChEBI" id="CHEBI:16526"/>
        <dbReference type="ChEBI" id="CHEBI:57307"/>
        <dbReference type="ChEBI" id="CHEBI:57309"/>
        <dbReference type="EC" id="1.3.3.3"/>
    </reaction>
</comment>
<comment type="cofactor">
    <cofactor evidence="1">
        <name>a divalent metal cation</name>
        <dbReference type="ChEBI" id="CHEBI:60240"/>
    </cofactor>
</comment>
<comment type="pathway">
    <text evidence="1">Porphyrin-containing compound metabolism; protoporphyrin-IX biosynthesis; protoporphyrinogen-IX from coproporphyrinogen-III (O2 route): step 1/1.</text>
</comment>
<comment type="subunit">
    <text evidence="1">Homodimer.</text>
</comment>
<comment type="subcellular location">
    <subcellularLocation>
        <location evidence="1">Cytoplasm</location>
    </subcellularLocation>
</comment>
<comment type="similarity">
    <text evidence="1">Belongs to the aerobic coproporphyrinogen-III oxidase family.</text>
</comment>
<protein>
    <recommendedName>
        <fullName evidence="1">Oxygen-dependent coproporphyrinogen-III oxidase</fullName>
        <shortName evidence="1">CPO</shortName>
        <shortName evidence="1">Coprogen oxidase</shortName>
        <shortName evidence="1">Coproporphyrinogenase</shortName>
        <ecNumber evidence="1">1.3.3.3</ecNumber>
    </recommendedName>
</protein>
<keyword id="KW-0963">Cytoplasm</keyword>
<keyword id="KW-0350">Heme biosynthesis</keyword>
<keyword id="KW-0479">Metal-binding</keyword>
<keyword id="KW-0560">Oxidoreductase</keyword>
<keyword id="KW-0627">Porphyrin biosynthesis</keyword>
<gene>
    <name evidence="1" type="primary">hemF</name>
    <name type="ordered locus">SSPA0389</name>
</gene>
<accession>B5BB50</accession>
<evidence type="ECO:0000255" key="1">
    <source>
        <dbReference type="HAMAP-Rule" id="MF_00333"/>
    </source>
</evidence>
<reference key="1">
    <citation type="journal article" date="2009" name="BMC Genomics">
        <title>Pseudogene accumulation in the evolutionary histories of Salmonella enterica serovars Paratyphi A and Typhi.</title>
        <authorList>
            <person name="Holt K.E."/>
            <person name="Thomson N.R."/>
            <person name="Wain J."/>
            <person name="Langridge G.C."/>
            <person name="Hasan R."/>
            <person name="Bhutta Z.A."/>
            <person name="Quail M.A."/>
            <person name="Norbertczak H."/>
            <person name="Walker D."/>
            <person name="Simmonds M."/>
            <person name="White B."/>
            <person name="Bason N."/>
            <person name="Mungall K."/>
            <person name="Dougan G."/>
            <person name="Parkhill J."/>
        </authorList>
    </citation>
    <scope>NUCLEOTIDE SEQUENCE [LARGE SCALE GENOMIC DNA]</scope>
    <source>
        <strain>AKU_12601</strain>
    </source>
</reference>